<feature type="chain" id="PRO_0000080329" description="Cell wall alpha-1,3-glucan synthase mok11">
    <location>
        <begin position="1"/>
        <end position="2397"/>
    </location>
</feature>
<feature type="region of interest" description="Disordered" evidence="1">
    <location>
        <begin position="1683"/>
        <end position="1705"/>
    </location>
</feature>
<feature type="compositionally biased region" description="Low complexity" evidence="1">
    <location>
        <begin position="1687"/>
        <end position="1698"/>
    </location>
</feature>
<comment type="catalytic activity">
    <reaction>
        <text>[(1-&gt;3)-alpha-D-glucosyl](n) + UDP-alpha-D-glucose = [(1-&gt;3)-alpha-D-glucosyl](n+1) + UDP + H(+)</text>
        <dbReference type="Rhea" id="RHEA:19749"/>
        <dbReference type="Rhea" id="RHEA-COMP:11150"/>
        <dbReference type="Rhea" id="RHEA-COMP:11151"/>
        <dbReference type="ChEBI" id="CHEBI:15378"/>
        <dbReference type="ChEBI" id="CHEBI:28100"/>
        <dbReference type="ChEBI" id="CHEBI:58223"/>
        <dbReference type="ChEBI" id="CHEBI:58885"/>
        <dbReference type="EC" id="2.4.1.183"/>
    </reaction>
</comment>
<comment type="similarity">
    <text evidence="2">Belongs to the glycosyltransferase group 1 family.</text>
</comment>
<organism>
    <name type="scientific">Schizosaccharomyces pombe (strain 972 / ATCC 24843)</name>
    <name type="common">Fission yeast</name>
    <dbReference type="NCBI Taxonomy" id="284812"/>
    <lineage>
        <taxon>Eukaryota</taxon>
        <taxon>Fungi</taxon>
        <taxon>Dikarya</taxon>
        <taxon>Ascomycota</taxon>
        <taxon>Taphrinomycotina</taxon>
        <taxon>Schizosaccharomycetes</taxon>
        <taxon>Schizosaccharomycetales</taxon>
        <taxon>Schizosaccharomycetaceae</taxon>
        <taxon>Schizosaccharomyces</taxon>
    </lineage>
</organism>
<keyword id="KW-0961">Cell wall biogenesis/degradation</keyword>
<keyword id="KW-0328">Glycosyltransferase</keyword>
<keyword id="KW-1185">Reference proteome</keyword>
<keyword id="KW-0808">Transferase</keyword>
<dbReference type="EC" id="2.4.1.183"/>
<dbReference type="EMBL" id="AB018380">
    <property type="protein sequence ID" value="BAA76557.1"/>
    <property type="molecule type" value="Genomic_DNA"/>
</dbReference>
<dbReference type="EMBL" id="CU329670">
    <property type="protein sequence ID" value="CAB90796.2"/>
    <property type="molecule type" value="Genomic_DNA"/>
</dbReference>
<dbReference type="PIR" id="T38290">
    <property type="entry name" value="S62506"/>
</dbReference>
<dbReference type="RefSeq" id="NP_001018282.1">
    <property type="nucleotide sequence ID" value="NM_001019981.2"/>
</dbReference>
<dbReference type="BioGRID" id="280486">
    <property type="interactions" value="24"/>
</dbReference>
<dbReference type="FunCoup" id="Q09854">
    <property type="interactions" value="6"/>
</dbReference>
<dbReference type="STRING" id="284812.Q09854"/>
<dbReference type="CAZy" id="GH13">
    <property type="family name" value="Glycoside Hydrolase Family 13"/>
</dbReference>
<dbReference type="CAZy" id="GT5">
    <property type="family name" value="Glycosyltransferase Family 5"/>
</dbReference>
<dbReference type="PaxDb" id="4896-SPAC1527.01.1"/>
<dbReference type="EnsemblFungi" id="SPAC1527.01.1">
    <property type="protein sequence ID" value="SPAC1527.01.1:pep"/>
    <property type="gene ID" value="SPAC1527.01"/>
</dbReference>
<dbReference type="GeneID" id="3361410"/>
<dbReference type="KEGG" id="spo:3361410"/>
<dbReference type="PomBase" id="SPAC1527.01">
    <property type="gene designation" value="mok11"/>
</dbReference>
<dbReference type="VEuPathDB" id="FungiDB:SPAC1527.01"/>
<dbReference type="eggNOG" id="ENOG502QSGC">
    <property type="taxonomic scope" value="Eukaryota"/>
</dbReference>
<dbReference type="HOGENOM" id="CLU_000488_0_0_1"/>
<dbReference type="InParanoid" id="Q09854"/>
<dbReference type="OMA" id="LQTLWGT"/>
<dbReference type="PhylomeDB" id="Q09854"/>
<dbReference type="PRO" id="PR:Q09854"/>
<dbReference type="Proteomes" id="UP000002485">
    <property type="component" value="Chromosome I"/>
</dbReference>
<dbReference type="GO" id="GO:0009277">
    <property type="term" value="C:fungal-type cell wall"/>
    <property type="evidence" value="ECO:0000318"/>
    <property type="project" value="GO_Central"/>
</dbReference>
<dbReference type="GO" id="GO:0047657">
    <property type="term" value="F:alpha-1,3-glucan synthase activity"/>
    <property type="evidence" value="ECO:0000318"/>
    <property type="project" value="GO_Central"/>
</dbReference>
<dbReference type="GO" id="GO:0071555">
    <property type="term" value="P:cell wall organization"/>
    <property type="evidence" value="ECO:0007669"/>
    <property type="project" value="UniProtKB-KW"/>
</dbReference>
<dbReference type="GO" id="GO:0070600">
    <property type="term" value="P:fungal-type cell wall (1-&gt;3)-alpha-glucan biosynthetic process"/>
    <property type="evidence" value="ECO:0000318"/>
    <property type="project" value="GO_Central"/>
</dbReference>
<dbReference type="CDD" id="cd11323">
    <property type="entry name" value="AmyAc_AGS"/>
    <property type="match status" value="1"/>
</dbReference>
<dbReference type="CDD" id="cd06174">
    <property type="entry name" value="MFS"/>
    <property type="match status" value="1"/>
</dbReference>
<dbReference type="FunFam" id="3.20.20.80:FF:000073">
    <property type="entry name" value="Alpha-1,3-glucan synthase Ags2"/>
    <property type="match status" value="1"/>
</dbReference>
<dbReference type="FunFam" id="3.40.50.2000:FF:000052">
    <property type="entry name" value="Alpha-1,3-glucan synthase Ags2"/>
    <property type="match status" value="1"/>
</dbReference>
<dbReference type="Gene3D" id="3.40.50.2000">
    <property type="entry name" value="Glycogen Phosphorylase B"/>
    <property type="match status" value="2"/>
</dbReference>
<dbReference type="Gene3D" id="3.20.20.80">
    <property type="entry name" value="Glycosidases"/>
    <property type="match status" value="1"/>
</dbReference>
<dbReference type="InterPro" id="IPR006047">
    <property type="entry name" value="Glyco_hydro_13_cat_dom"/>
</dbReference>
<dbReference type="InterPro" id="IPR001296">
    <property type="entry name" value="Glyco_trans_1"/>
</dbReference>
<dbReference type="InterPro" id="IPR017853">
    <property type="entry name" value="Glycoside_hydrolase_SF"/>
</dbReference>
<dbReference type="InterPro" id="IPR013534">
    <property type="entry name" value="Starch_synth_cat_dom"/>
</dbReference>
<dbReference type="PANTHER" id="PTHR47182">
    <property type="entry name" value="CELL WALL ALPHA-1,3-GLUCAN SYNTHASE AGS1-RELATED"/>
    <property type="match status" value="1"/>
</dbReference>
<dbReference type="PANTHER" id="PTHR47182:SF6">
    <property type="entry name" value="CELL WALL ALPHA-1,3-GLUCAN SYNTHASE MOK11"/>
    <property type="match status" value="1"/>
</dbReference>
<dbReference type="Pfam" id="PF00128">
    <property type="entry name" value="Alpha-amylase"/>
    <property type="match status" value="1"/>
</dbReference>
<dbReference type="Pfam" id="PF08323">
    <property type="entry name" value="Glyco_transf_5"/>
    <property type="match status" value="1"/>
</dbReference>
<dbReference type="Pfam" id="PF00534">
    <property type="entry name" value="Glycos_transf_1"/>
    <property type="match status" value="1"/>
</dbReference>
<dbReference type="SMART" id="SM00642">
    <property type="entry name" value="Aamy"/>
    <property type="match status" value="1"/>
</dbReference>
<dbReference type="SUPFAM" id="SSF51445">
    <property type="entry name" value="(Trans)glycosidases"/>
    <property type="match status" value="1"/>
</dbReference>
<dbReference type="SUPFAM" id="SSF53756">
    <property type="entry name" value="UDP-Glycosyltransferase/glycogen phosphorylase"/>
    <property type="match status" value="1"/>
</dbReference>
<protein>
    <recommendedName>
        <fullName>Cell wall alpha-1,3-glucan synthase mok11</fullName>
        <ecNumber>2.4.1.183</ecNumber>
    </recommendedName>
</protein>
<sequence>MAYPLVVSFFLYIVILDKHAWCAPFNNLLTDWNLNTNVSALDPSDYWGEWENHEFFPSPEHWRFPIYTIAIDKWVDGDPTNNDFSGTRFEYDIYETEFRNGGDIIGVRQSLDYLQGMGVKAVYFAGTPFVNMPWGADQYSPLDFTLLDPHLGTINDWRGTIEEMHSKGMYVIVDLTVATLADLIGFEGFTNTTTPFTFIEHNALWKGEDRYADWNFTNSWDPDCELPRFWGESGEPVVVEWTGCYNSDFDQYGDTEAFGSHPDWQRQLSKFASVQDRLREWKPSVASKLKRLSCLVISMLDVDGFRIDKATQMTVDFLVDWAKSVRLCANRFNKSNFFIPGEVTGPSSFGAIYYNRGRQPNQRPANLIDALNATSSDNVYFLREEGENALDASAFHYSVYRIILRFLRMDGLMEIPYDLPVDLAEAWHQIVINEDSFNPKTEKYDPRHLYGVSNYDVFRWASVADGSRRLILGTMMTFFLFPGAPLIYYGDEQGLYVLDNSANNYLYGRQSMAAAPAWYIHGCYSGSSSTYPAIDLSPAKIGCLDIWNSLDHFDPSRIERQLFIEFQDIRSRYSALTHGWKSELLGNWTNIEYLPNSGINPSNVGTFSMVRGAINSLQNISSEYNFPGVKTSSSDVWILFTNSNVSVNLKSNCFSKEAIVSPFISGTKIKNLVYPYDEYQLEASSHFSQISNTEPMGCLPELGLDGYGYKLFVPINEYIPRRPFITKFSPSHDSRLVIPLEKLRIIVEFSEEMDCKSISKSLLITSKTLNGDSPVLDESSVTCQKINDKDRVRFSGQSSSLFRWSATFSNIADGIHRISFNNASTADGKDFTHSVDHFLLRVGSLNNPIVFSSANYSYDLLQKENNSVYIKHAAIGADMFRYSLDFGSTWTEWQTYDGNNTYCNLSGWSQSSRYGWKGHHIMVQYWSELTGSSNYMQESDLEYPYKRWFPHVFMDSDYTQWTHDSDIRNRMLPLENGSFLGYHIADVYPSALQFNVWGLNKDGKADKSFIYGSLQNNSFLSRVSPSSLEENVFYIQHPPPKSYLSWSVTFDPQRRRYYINPSGCVFVSLGIYLSSLIVPLLTGVLAVYIFKKKFYHVKFNAFGTSKQNLHFRQHDVLGMKNLFNFSCSNKIKGEEVLNDGDKGKRRTVLLATLEYDIPSLNICIKIGGLGVMAQLMARHLEHEDIIWVIPCVGDVSYSNVEEDDPIEVVIIDQTYFINVYKYVIGNIIYILLDAPIFRRQTSGKPYPSRADDLSSAIFYSAWNQCIASVISRNNIDLYHMNDYHGSLAPLYLLPKIIPVALSLHNAEFQGLWPLRNSSEKEEVCSVFNISKSVCSKYVQFGNVFNLLHAGASYIRIHQKGYGVVGVSSKYGKRSWARYPIFWGLRKIGKLPNPDPADNGTNFKDLDANSMNEFENIKAKHKRSAQEWANLNIDPEADLLIFVGRWTLQKGIDLIADITPTLLENFNSQIVVVGPVIDLYGKFAAEKFTALMKKYPGRIYSRPLFTQLPSYIFSGADFALIPSRDEPFGLVAVEFGRKGTLGIGAKVGGLGQMPGWWYTIESNTTAHLLCQFEEACRQALTSSKSVRTKLRAISTIQRFPVSEWVSKLDTHVRNCIKFSHKQNLEEDFIHEPVIDVDEFAISSSKDIDADEDLEIIGSSDNKAIDSNGEGFLIEKDNIGTGSYSNQQSFDFKSSESDSFPQKSPSVESFSIIDNDNPFHEGQNSSTGYKDIVQGLLAENGVSEAGVDVMTSIVSSTIPIVSNHQTEGSQMFNEISSVSSIHVYHDESQPPVEMPAESDTPLQNKLYHPGMWSSSDIRIPNNSSQLSIDSVRSGMRPFSLSKVPHQFDDEEGKALQIFREKLKDLNCKNSMNEMCIENFLMKCTRKYFDEVRKLRLGTLKPENLQFVKDPSSLALETNLLPASDTIEEKNDVGNKQVNSHILDPGFLKEEECVYEFEQLHGLRKALQVEIYGWPLYTILLAIGQVLAATSFQLNLFSDTPDQPEYQSYIVCSVYISASLFWYILHSLVPNIYALSTPFIIYATAFALAGLTTFSSLGDSRLWISRVATWIYSIASGSQALFFSLNFGNEGRYDILYWIVRACFIQGSQQVWSAALWYWGSYSTDKPNRMGVSGKLNPQPWMAAITWPIALVLLAIAFVVYRGLPNFYRQCPSKIPAFYRSLFRRRLIMWFFISVFLQNYWMSSVYGRSWAFMWSAHNVHKWAMFLLVILFYVAIWIALVALLASLSRYHSWILPILGLGFGAPRWLQTLWGTSNIGIYVPFLGKGAPYLSRMLWLYLGLLDTVQTVGIGIILLQTLTREHITVVLITGQIVGAIASMVGKASSPSKFGPGDVFIDFTHWSVKDGPQILASIPFWVCLICQLSVIIGYFLFFRRENLSRP</sequence>
<reference key="1">
    <citation type="submission" date="1998-10" db="EMBL/GenBank/DDBJ databases">
        <title>Fission yeast alpha-glucan synthase Mok1 localizes closely with actin and play a role essential for cell morphogenesis and protein kinase C function.</title>
        <authorList>
            <person name="Katayama S."/>
            <person name="Dai H."/>
            <person name="Arellano M."/>
            <person name="Perez P."/>
            <person name="Toda T."/>
        </authorList>
    </citation>
    <scope>NUCLEOTIDE SEQUENCE [GENOMIC DNA] OF 1-1204</scope>
    <source>
        <strain>972 / ATCC 24843</strain>
    </source>
</reference>
<reference key="2">
    <citation type="journal article" date="2002" name="Nature">
        <title>The genome sequence of Schizosaccharomyces pombe.</title>
        <authorList>
            <person name="Wood V."/>
            <person name="Gwilliam R."/>
            <person name="Rajandream M.A."/>
            <person name="Lyne M.H."/>
            <person name="Lyne R."/>
            <person name="Stewart A."/>
            <person name="Sgouros J.G."/>
            <person name="Peat N."/>
            <person name="Hayles J."/>
            <person name="Baker S.G."/>
            <person name="Basham D."/>
            <person name="Bowman S."/>
            <person name="Brooks K."/>
            <person name="Brown D."/>
            <person name="Brown S."/>
            <person name="Chillingworth T."/>
            <person name="Churcher C.M."/>
            <person name="Collins M."/>
            <person name="Connor R."/>
            <person name="Cronin A."/>
            <person name="Davis P."/>
            <person name="Feltwell T."/>
            <person name="Fraser A."/>
            <person name="Gentles S."/>
            <person name="Goble A."/>
            <person name="Hamlin N."/>
            <person name="Harris D.E."/>
            <person name="Hidalgo J."/>
            <person name="Hodgson G."/>
            <person name="Holroyd S."/>
            <person name="Hornsby T."/>
            <person name="Howarth S."/>
            <person name="Huckle E.J."/>
            <person name="Hunt S."/>
            <person name="Jagels K."/>
            <person name="James K.D."/>
            <person name="Jones L."/>
            <person name="Jones M."/>
            <person name="Leather S."/>
            <person name="McDonald S."/>
            <person name="McLean J."/>
            <person name="Mooney P."/>
            <person name="Moule S."/>
            <person name="Mungall K.L."/>
            <person name="Murphy L.D."/>
            <person name="Niblett D."/>
            <person name="Odell C."/>
            <person name="Oliver K."/>
            <person name="O'Neil S."/>
            <person name="Pearson D."/>
            <person name="Quail M.A."/>
            <person name="Rabbinowitsch E."/>
            <person name="Rutherford K.M."/>
            <person name="Rutter S."/>
            <person name="Saunders D."/>
            <person name="Seeger K."/>
            <person name="Sharp S."/>
            <person name="Skelton J."/>
            <person name="Simmonds M.N."/>
            <person name="Squares R."/>
            <person name="Squares S."/>
            <person name="Stevens K."/>
            <person name="Taylor K."/>
            <person name="Taylor R.G."/>
            <person name="Tivey A."/>
            <person name="Walsh S.V."/>
            <person name="Warren T."/>
            <person name="Whitehead S."/>
            <person name="Woodward J.R."/>
            <person name="Volckaert G."/>
            <person name="Aert R."/>
            <person name="Robben J."/>
            <person name="Grymonprez B."/>
            <person name="Weltjens I."/>
            <person name="Vanstreels E."/>
            <person name="Rieger M."/>
            <person name="Schaefer M."/>
            <person name="Mueller-Auer S."/>
            <person name="Gabel C."/>
            <person name="Fuchs M."/>
            <person name="Duesterhoeft A."/>
            <person name="Fritzc C."/>
            <person name="Holzer E."/>
            <person name="Moestl D."/>
            <person name="Hilbert H."/>
            <person name="Borzym K."/>
            <person name="Langer I."/>
            <person name="Beck A."/>
            <person name="Lehrach H."/>
            <person name="Reinhardt R."/>
            <person name="Pohl T.M."/>
            <person name="Eger P."/>
            <person name="Zimmermann W."/>
            <person name="Wedler H."/>
            <person name="Wambutt R."/>
            <person name="Purnelle B."/>
            <person name="Goffeau A."/>
            <person name="Cadieu E."/>
            <person name="Dreano S."/>
            <person name="Gloux S."/>
            <person name="Lelaure V."/>
            <person name="Mottier S."/>
            <person name="Galibert F."/>
            <person name="Aves S.J."/>
            <person name="Xiang Z."/>
            <person name="Hunt C."/>
            <person name="Moore K."/>
            <person name="Hurst S.M."/>
            <person name="Lucas M."/>
            <person name="Rochet M."/>
            <person name="Gaillardin C."/>
            <person name="Tallada V.A."/>
            <person name="Garzon A."/>
            <person name="Thode G."/>
            <person name="Daga R.R."/>
            <person name="Cruzado L."/>
            <person name="Jimenez J."/>
            <person name="Sanchez M."/>
            <person name="del Rey F."/>
            <person name="Benito J."/>
            <person name="Dominguez A."/>
            <person name="Revuelta J.L."/>
            <person name="Moreno S."/>
            <person name="Armstrong J."/>
            <person name="Forsburg S.L."/>
            <person name="Cerutti L."/>
            <person name="Lowe T."/>
            <person name="McCombie W.R."/>
            <person name="Paulsen I."/>
            <person name="Potashkin J."/>
            <person name="Shpakovski G.V."/>
            <person name="Ussery D."/>
            <person name="Barrell B.G."/>
            <person name="Nurse P."/>
        </authorList>
    </citation>
    <scope>NUCLEOTIDE SEQUENCE [LARGE SCALE GENOMIC DNA]</scope>
    <source>
        <strain>972 / ATCC 24843</strain>
    </source>
</reference>
<proteinExistence type="inferred from homology"/>
<gene>
    <name type="primary">mok11</name>
    <name type="ORF">SPAC1527.01</name>
    <name type="ORF">SPAC23D3.15</name>
</gene>
<accession>Q09854</accession>
<accession>Q9P6K2</accession>
<name>MOK11_SCHPO</name>
<evidence type="ECO:0000256" key="1">
    <source>
        <dbReference type="SAM" id="MobiDB-lite"/>
    </source>
</evidence>
<evidence type="ECO:0000305" key="2"/>